<keyword id="KW-0687">Ribonucleoprotein</keyword>
<keyword id="KW-0689">Ribosomal protein</keyword>
<keyword id="KW-0694">RNA-binding</keyword>
<keyword id="KW-0699">rRNA-binding</keyword>
<sequence>MIQQESQLKVADNTGAKKVKCFKVLGGSRRRYATVGDVIVCSVRDVEPNSSIKKGDVIKAVIVRTRRHITRKDGSTLKFDTNSCVIIDDKGNPKGTRIFGPVAREIRDRGFIKISSLAPEVI</sequence>
<reference key="1">
    <citation type="journal article" date="1999" name="Nat. Genet.">
        <title>Comparative genomes of Chlamydia pneumoniae and C. trachomatis.</title>
        <authorList>
            <person name="Kalman S."/>
            <person name="Mitchell W.P."/>
            <person name="Marathe R."/>
            <person name="Lammel C.J."/>
            <person name="Fan J."/>
            <person name="Hyman R.W."/>
            <person name="Olinger L."/>
            <person name="Grimwood J."/>
            <person name="Davis R.W."/>
            <person name="Stephens R.S."/>
        </authorList>
    </citation>
    <scope>NUCLEOTIDE SEQUENCE [LARGE SCALE GENOMIC DNA]</scope>
    <source>
        <strain>CWL029</strain>
    </source>
</reference>
<reference key="2">
    <citation type="journal article" date="2000" name="Nucleic Acids Res.">
        <title>Genome sequences of Chlamydia trachomatis MoPn and Chlamydia pneumoniae AR39.</title>
        <authorList>
            <person name="Read T.D."/>
            <person name="Brunham R.C."/>
            <person name="Shen C."/>
            <person name="Gill S.R."/>
            <person name="Heidelberg J.F."/>
            <person name="White O."/>
            <person name="Hickey E.K."/>
            <person name="Peterson J.D."/>
            <person name="Utterback T.R."/>
            <person name="Berry K.J."/>
            <person name="Bass S."/>
            <person name="Linher K.D."/>
            <person name="Weidman J.F."/>
            <person name="Khouri H.M."/>
            <person name="Craven B."/>
            <person name="Bowman C."/>
            <person name="Dodson R.J."/>
            <person name="Gwinn M.L."/>
            <person name="Nelson W.C."/>
            <person name="DeBoy R.T."/>
            <person name="Kolonay J.F."/>
            <person name="McClarty G."/>
            <person name="Salzberg S.L."/>
            <person name="Eisen J.A."/>
            <person name="Fraser C.M."/>
        </authorList>
    </citation>
    <scope>NUCLEOTIDE SEQUENCE [LARGE SCALE GENOMIC DNA]</scope>
    <source>
        <strain>AR39</strain>
    </source>
</reference>
<reference key="3">
    <citation type="journal article" date="2000" name="Nucleic Acids Res.">
        <title>Comparison of whole genome sequences of Chlamydia pneumoniae J138 from Japan and CWL029 from USA.</title>
        <authorList>
            <person name="Shirai M."/>
            <person name="Hirakawa H."/>
            <person name="Kimoto M."/>
            <person name="Tabuchi M."/>
            <person name="Kishi F."/>
            <person name="Ouchi K."/>
            <person name="Shiba T."/>
            <person name="Ishii K."/>
            <person name="Hattori M."/>
            <person name="Kuhara S."/>
            <person name="Nakazawa T."/>
        </authorList>
    </citation>
    <scope>NUCLEOTIDE SEQUENCE [LARGE SCALE GENOMIC DNA]</scope>
    <source>
        <strain>J138</strain>
    </source>
</reference>
<reference key="4">
    <citation type="submission" date="2002-05" db="EMBL/GenBank/DDBJ databases">
        <title>The genome sequence of Chlamydia pneumoniae TW183 and comparison with other Chlamydia strains based on whole genome sequence analysis.</title>
        <authorList>
            <person name="Geng M.M."/>
            <person name="Schuhmacher A."/>
            <person name="Muehldorfer I."/>
            <person name="Bensch K.W."/>
            <person name="Schaefer K.P."/>
            <person name="Schneider S."/>
            <person name="Pohl T."/>
            <person name="Essig A."/>
            <person name="Marre R."/>
            <person name="Melchers K."/>
        </authorList>
    </citation>
    <scope>NUCLEOTIDE SEQUENCE [LARGE SCALE GENOMIC DNA]</scope>
    <source>
        <strain>TW-183</strain>
    </source>
</reference>
<proteinExistence type="inferred from homology"/>
<gene>
    <name evidence="1" type="primary">rplN</name>
    <name type="synonym">rl14</name>
    <name type="ordered locus">CPn_0637</name>
    <name type="ordered locus">CP_0110</name>
    <name type="ordered locus">CpB0663</name>
</gene>
<comment type="function">
    <text evidence="1">Binds to 23S rRNA. Forms part of two intersubunit bridges in the 70S ribosome.</text>
</comment>
<comment type="subunit">
    <text evidence="1">Part of the 50S ribosomal subunit. Forms a cluster with proteins L3 and L19. In the 70S ribosome, L14 and L19 interact and together make contacts with the 16S rRNA in bridges B5 and B8.</text>
</comment>
<comment type="similarity">
    <text evidence="1">Belongs to the universal ribosomal protein uL14 family.</text>
</comment>
<protein>
    <recommendedName>
        <fullName evidence="1">Large ribosomal subunit protein uL14</fullName>
    </recommendedName>
    <alternativeName>
        <fullName evidence="2">50S ribosomal protein L14</fullName>
    </alternativeName>
</protein>
<feature type="chain" id="PRO_0000128537" description="Large ribosomal subunit protein uL14">
    <location>
        <begin position="1"/>
        <end position="122"/>
    </location>
</feature>
<feature type="sequence conflict" description="In Ref. 3; BAA98844." evidence="2" ref="3">
    <original>V</original>
    <variation>E</variation>
    <location>
        <position position="61"/>
    </location>
</feature>
<evidence type="ECO:0000255" key="1">
    <source>
        <dbReference type="HAMAP-Rule" id="MF_01367"/>
    </source>
</evidence>
<evidence type="ECO:0000305" key="2"/>
<accession>Q9Z7R7</accession>
<accession>Q9JSC6</accession>
<dbReference type="EMBL" id="AE001363">
    <property type="protein sequence ID" value="AAD18776.1"/>
    <property type="molecule type" value="Genomic_DNA"/>
</dbReference>
<dbReference type="EMBL" id="AE002161">
    <property type="protein sequence ID" value="AAF37993.1"/>
    <property type="molecule type" value="Genomic_DNA"/>
</dbReference>
<dbReference type="EMBL" id="BA000008">
    <property type="protein sequence ID" value="BAA98844.1"/>
    <property type="molecule type" value="Genomic_DNA"/>
</dbReference>
<dbReference type="EMBL" id="AE009440">
    <property type="protein sequence ID" value="AAP98592.1"/>
    <property type="molecule type" value="Genomic_DNA"/>
</dbReference>
<dbReference type="PIR" id="B86570">
    <property type="entry name" value="B86570"/>
</dbReference>
<dbReference type="PIR" id="G72054">
    <property type="entry name" value="G72054"/>
</dbReference>
<dbReference type="RefSeq" id="NP_224833.1">
    <property type="nucleotide sequence ID" value="NC_000922.1"/>
</dbReference>
<dbReference type="RefSeq" id="WP_010883275.1">
    <property type="nucleotide sequence ID" value="NZ_LN847257.1"/>
</dbReference>
<dbReference type="SMR" id="Q9Z7R7"/>
<dbReference type="STRING" id="406984.CPK_ORF00037"/>
<dbReference type="GeneID" id="45050687"/>
<dbReference type="KEGG" id="cpa:CP_0110"/>
<dbReference type="KEGG" id="cpj:rl14"/>
<dbReference type="KEGG" id="cpn:CPn_0637"/>
<dbReference type="KEGG" id="cpt:CpB0663"/>
<dbReference type="PATRIC" id="fig|115713.3.peg.707"/>
<dbReference type="eggNOG" id="COG0093">
    <property type="taxonomic scope" value="Bacteria"/>
</dbReference>
<dbReference type="HOGENOM" id="CLU_095071_2_1_0"/>
<dbReference type="OMA" id="MIQMQTR"/>
<dbReference type="OrthoDB" id="9806379at2"/>
<dbReference type="Proteomes" id="UP000000583">
    <property type="component" value="Chromosome"/>
</dbReference>
<dbReference type="Proteomes" id="UP000000801">
    <property type="component" value="Chromosome"/>
</dbReference>
<dbReference type="GO" id="GO:0022625">
    <property type="term" value="C:cytosolic large ribosomal subunit"/>
    <property type="evidence" value="ECO:0007669"/>
    <property type="project" value="TreeGrafter"/>
</dbReference>
<dbReference type="GO" id="GO:0070180">
    <property type="term" value="F:large ribosomal subunit rRNA binding"/>
    <property type="evidence" value="ECO:0007669"/>
    <property type="project" value="TreeGrafter"/>
</dbReference>
<dbReference type="GO" id="GO:0003735">
    <property type="term" value="F:structural constituent of ribosome"/>
    <property type="evidence" value="ECO:0007669"/>
    <property type="project" value="InterPro"/>
</dbReference>
<dbReference type="GO" id="GO:0006412">
    <property type="term" value="P:translation"/>
    <property type="evidence" value="ECO:0007669"/>
    <property type="project" value="UniProtKB-UniRule"/>
</dbReference>
<dbReference type="CDD" id="cd00337">
    <property type="entry name" value="Ribosomal_uL14"/>
    <property type="match status" value="1"/>
</dbReference>
<dbReference type="FunFam" id="2.40.150.20:FF:000001">
    <property type="entry name" value="50S ribosomal protein L14"/>
    <property type="match status" value="1"/>
</dbReference>
<dbReference type="Gene3D" id="2.40.150.20">
    <property type="entry name" value="Ribosomal protein L14"/>
    <property type="match status" value="1"/>
</dbReference>
<dbReference type="HAMAP" id="MF_01367">
    <property type="entry name" value="Ribosomal_uL14"/>
    <property type="match status" value="1"/>
</dbReference>
<dbReference type="InterPro" id="IPR000218">
    <property type="entry name" value="Ribosomal_uL14"/>
</dbReference>
<dbReference type="InterPro" id="IPR005745">
    <property type="entry name" value="Ribosomal_uL14_bac-type"/>
</dbReference>
<dbReference type="InterPro" id="IPR019972">
    <property type="entry name" value="Ribosomal_uL14_CS"/>
</dbReference>
<dbReference type="InterPro" id="IPR036853">
    <property type="entry name" value="Ribosomal_uL14_sf"/>
</dbReference>
<dbReference type="NCBIfam" id="TIGR01067">
    <property type="entry name" value="rplN_bact"/>
    <property type="match status" value="1"/>
</dbReference>
<dbReference type="PANTHER" id="PTHR11761">
    <property type="entry name" value="50S/60S RIBOSOMAL PROTEIN L14/L23"/>
    <property type="match status" value="1"/>
</dbReference>
<dbReference type="PANTHER" id="PTHR11761:SF3">
    <property type="entry name" value="LARGE RIBOSOMAL SUBUNIT PROTEIN UL14M"/>
    <property type="match status" value="1"/>
</dbReference>
<dbReference type="Pfam" id="PF00238">
    <property type="entry name" value="Ribosomal_L14"/>
    <property type="match status" value="1"/>
</dbReference>
<dbReference type="SMART" id="SM01374">
    <property type="entry name" value="Ribosomal_L14"/>
    <property type="match status" value="1"/>
</dbReference>
<dbReference type="SUPFAM" id="SSF50193">
    <property type="entry name" value="Ribosomal protein L14"/>
    <property type="match status" value="1"/>
</dbReference>
<dbReference type="PROSITE" id="PS00049">
    <property type="entry name" value="RIBOSOMAL_L14"/>
    <property type="match status" value="1"/>
</dbReference>
<name>RL14_CHLPN</name>
<organism>
    <name type="scientific">Chlamydia pneumoniae</name>
    <name type="common">Chlamydophila pneumoniae</name>
    <dbReference type="NCBI Taxonomy" id="83558"/>
    <lineage>
        <taxon>Bacteria</taxon>
        <taxon>Pseudomonadati</taxon>
        <taxon>Chlamydiota</taxon>
        <taxon>Chlamydiia</taxon>
        <taxon>Chlamydiales</taxon>
        <taxon>Chlamydiaceae</taxon>
        <taxon>Chlamydia/Chlamydophila group</taxon>
        <taxon>Chlamydia</taxon>
    </lineage>
</organism>